<accession>Q06087</accession>
<keyword id="KW-0210">Decarboxylase</keyword>
<keyword id="KW-0456">Lyase</keyword>
<keyword id="KW-0663">Pyridoxal phosphate</keyword>
<feature type="chain" id="PRO_0000146997" description="Tyrosine decarboxylase 3">
    <location>
        <begin position="1"/>
        <end position="516"/>
    </location>
</feature>
<feature type="modified residue" description="N6-(pyridoxal phosphate)lysine" evidence="1">
    <location>
        <position position="319"/>
    </location>
</feature>
<proteinExistence type="evidence at transcript level"/>
<evidence type="ECO:0000250" key="1"/>
<evidence type="ECO:0000305" key="2"/>
<reference key="1">
    <citation type="journal article" date="1993" name="J. Biol. Chem.">
        <title>A pathogen-responsive gene of parsley encodes tyrosine decarboxylase.</title>
        <authorList>
            <person name="Kawalleck P."/>
            <person name="Keller H."/>
            <person name="Hahlbrock K."/>
            <person name="Scheel D."/>
            <person name="Somssich I.E."/>
        </authorList>
    </citation>
    <scope>NUCLEOTIDE SEQUENCE [MRNA]</scope>
</reference>
<dbReference type="EC" id="4.1.1.25"/>
<dbReference type="EMBL" id="M96071">
    <property type="protein sequence ID" value="AAA33861.1"/>
    <property type="status" value="ALT_INIT"/>
    <property type="molecule type" value="mRNA"/>
</dbReference>
<dbReference type="EMBL" id="M96072">
    <property type="protein sequence ID" value="AAA33862.1"/>
    <property type="status" value="ALT_INIT"/>
    <property type="molecule type" value="mRNA"/>
</dbReference>
<dbReference type="SMR" id="Q06087"/>
<dbReference type="BRENDA" id="4.1.1.25">
    <property type="organism ID" value="4694"/>
</dbReference>
<dbReference type="GO" id="GO:0005737">
    <property type="term" value="C:cytoplasm"/>
    <property type="evidence" value="ECO:0007669"/>
    <property type="project" value="TreeGrafter"/>
</dbReference>
<dbReference type="GO" id="GO:0030170">
    <property type="term" value="F:pyridoxal phosphate binding"/>
    <property type="evidence" value="ECO:0007669"/>
    <property type="project" value="InterPro"/>
</dbReference>
<dbReference type="GO" id="GO:0004837">
    <property type="term" value="F:tyrosine decarboxylase activity"/>
    <property type="evidence" value="ECO:0007669"/>
    <property type="project" value="UniProtKB-EC"/>
</dbReference>
<dbReference type="GO" id="GO:0006520">
    <property type="term" value="P:amino acid metabolic process"/>
    <property type="evidence" value="ECO:0007669"/>
    <property type="project" value="InterPro"/>
</dbReference>
<dbReference type="GO" id="GO:0019752">
    <property type="term" value="P:carboxylic acid metabolic process"/>
    <property type="evidence" value="ECO:0007669"/>
    <property type="project" value="InterPro"/>
</dbReference>
<dbReference type="CDD" id="cd06450">
    <property type="entry name" value="DOPA_deC_like"/>
    <property type="match status" value="1"/>
</dbReference>
<dbReference type="FunFam" id="1.20.1340.10:FF:000001">
    <property type="entry name" value="Histidine decarboxylase"/>
    <property type="match status" value="1"/>
</dbReference>
<dbReference type="FunFam" id="3.40.640.10:FF:000025">
    <property type="entry name" value="Histidine decarboxylase"/>
    <property type="match status" value="1"/>
</dbReference>
<dbReference type="Gene3D" id="3.90.1150.10">
    <property type="entry name" value="Aspartate Aminotransferase, domain 1"/>
    <property type="match status" value="1"/>
</dbReference>
<dbReference type="Gene3D" id="1.20.1340.10">
    <property type="entry name" value="dopa decarboxylase, N-terminal domain"/>
    <property type="match status" value="1"/>
</dbReference>
<dbReference type="Gene3D" id="3.40.640.10">
    <property type="entry name" value="Type I PLP-dependent aspartate aminotransferase-like (Major domain)"/>
    <property type="match status" value="1"/>
</dbReference>
<dbReference type="InterPro" id="IPR010977">
    <property type="entry name" value="Aromatic_deC"/>
</dbReference>
<dbReference type="InterPro" id="IPR002129">
    <property type="entry name" value="PyrdxlP-dep_de-COase"/>
</dbReference>
<dbReference type="InterPro" id="IPR015424">
    <property type="entry name" value="PyrdxlP-dep_Trfase"/>
</dbReference>
<dbReference type="InterPro" id="IPR015421">
    <property type="entry name" value="PyrdxlP-dep_Trfase_major"/>
</dbReference>
<dbReference type="InterPro" id="IPR015422">
    <property type="entry name" value="PyrdxlP-dep_Trfase_small"/>
</dbReference>
<dbReference type="InterPro" id="IPR021115">
    <property type="entry name" value="Pyridoxal-P_BS"/>
</dbReference>
<dbReference type="PANTHER" id="PTHR11999">
    <property type="entry name" value="GROUP II PYRIDOXAL-5-PHOSPHATE DECARBOXYLASE"/>
    <property type="match status" value="1"/>
</dbReference>
<dbReference type="PANTHER" id="PTHR11999:SF96">
    <property type="entry name" value="TYROSINE DECARBOXYLASE"/>
    <property type="match status" value="1"/>
</dbReference>
<dbReference type="Pfam" id="PF00282">
    <property type="entry name" value="Pyridoxal_deC"/>
    <property type="match status" value="1"/>
</dbReference>
<dbReference type="PRINTS" id="PR00800">
    <property type="entry name" value="YHDCRBOXLASE"/>
</dbReference>
<dbReference type="SUPFAM" id="SSF53383">
    <property type="entry name" value="PLP-dependent transferases"/>
    <property type="match status" value="1"/>
</dbReference>
<dbReference type="PROSITE" id="PS00392">
    <property type="entry name" value="DDC_GAD_HDC_YDC"/>
    <property type="match status" value="1"/>
</dbReference>
<protein>
    <recommendedName>
        <fullName>Tyrosine decarboxylase 3</fullName>
        <ecNumber>4.1.1.25</ecNumber>
    </recommendedName>
</protein>
<organism>
    <name type="scientific">Petroselinum crispum</name>
    <name type="common">Parsley</name>
    <name type="synonym">Petroselinum hortense</name>
    <dbReference type="NCBI Taxonomy" id="4043"/>
    <lineage>
        <taxon>Eukaryota</taxon>
        <taxon>Viridiplantae</taxon>
        <taxon>Streptophyta</taxon>
        <taxon>Embryophyta</taxon>
        <taxon>Tracheophyta</taxon>
        <taxon>Spermatophyta</taxon>
        <taxon>Magnoliopsida</taxon>
        <taxon>eudicotyledons</taxon>
        <taxon>Gunneridae</taxon>
        <taxon>Pentapetalae</taxon>
        <taxon>asterids</taxon>
        <taxon>campanulids</taxon>
        <taxon>Apiales</taxon>
        <taxon>Apiaceae</taxon>
        <taxon>Apioideae</taxon>
        <taxon>apioid superclade</taxon>
        <taxon>Apieae</taxon>
        <taxon>Petroselinum</taxon>
    </lineage>
</organism>
<comment type="catalytic activity">
    <reaction>
        <text>L-tyrosine + H(+) = tyramine + CO2</text>
        <dbReference type="Rhea" id="RHEA:14345"/>
        <dbReference type="ChEBI" id="CHEBI:15378"/>
        <dbReference type="ChEBI" id="CHEBI:16526"/>
        <dbReference type="ChEBI" id="CHEBI:58315"/>
        <dbReference type="ChEBI" id="CHEBI:327995"/>
        <dbReference type="EC" id="4.1.1.25"/>
    </reaction>
</comment>
<comment type="cofactor">
    <cofactor>
        <name>pyridoxal 5'-phosphate</name>
        <dbReference type="ChEBI" id="CHEBI:597326"/>
    </cofactor>
</comment>
<comment type="subunit">
    <text evidence="1">Homodimer.</text>
</comment>
<comment type="similarity">
    <text evidence="2">Belongs to the group II decarboxylase family.</text>
</comment>
<comment type="sequence caution" evidence="2">
    <conflict type="erroneous initiation">
        <sequence resource="EMBL-CDS" id="AAA33861"/>
    </conflict>
</comment>
<comment type="sequence caution" evidence="2">
    <conflict type="erroneous initiation">
        <sequence resource="EMBL-CDS" id="AAA33862"/>
    </conflict>
</comment>
<name>TYDC3_PETCR</name>
<sequence length="516" mass="57633">MGSIDNLTAQKLTSSQFPMNTLEPEEFRRQGHLMIDFLADYYRKVENYPVRSQVSPGYLREILPESAPYNPESLETILQDVQTKIIPGITHWQSPNFFAYFPSSGSTAGFLGEMLSTGFNVVGFNWMVSPAATELENVVTDWFGKMLQLPKSFLFSGGGGGVLQGTTCEAILCTLVAARDKNLRQHGMDNIGKLVVYCSDQTHSALQKAAKIAGIDPKNFRAIETTKSSNFKLCPKRLESAILYDLQNGLIPLYLCATVGTTSSTTVDPLPALTEVAKKYDLWVHVDAAYAGSACICPEFRQYLDGVENADSFSLNAHKWFLTTLDCCCLWVRDPSALIKSLSTYPEFLKNNASETNKVVDYKDWQIMLSRRFRALKLWFVLRSYGVGQLREFIRGHVGMAKYFEGLVGLDKRFEVVAPRLFSMVCFRIKPSAMIGKNDENEVNEINRKLLESVNDSGRIYVSHTVLGGIYVIRFAIGGTLTDINHVSAAWKVLQDHADALLDDAFLPKKIVNILS</sequence>
<gene>
    <name type="primary">TYRDC-3</name>
</gene>